<sequence length="883" mass="100935">MSTQLSPKYNPAEVEADRYQKWLDADVFKPSGDQKAKPYSIVIPPPNVTGKLHLGHAWDTTLPDIIIRQKRMQGFDTLWLPGMDHAGIATQAKVEARLAEDGISRYDLGREKFLDKVWEWKDEYAATIKEQWGKMGISVDYSRERFTLDEGLSKAVRKVFVELYKKGWIYRGEFIINWDPKARTALSDIEVIHKDVEGAFYHMNYMLEDGSRALEVATTRPETMFGDTAVAVNPNDDRYKDLIGQNVILPIVNKLIPIVADEHADPEFGTGVVKITPAHDPNDFLVGQRHNLPQVNVMNDDGTMNELAGEFAGMDRFEARKATVKKLEEIGALVEIEKMTHSVGHSERTGVPIEPRLSTQWFVKMDQLAKNAIANQDTDDKVDFYPPRFNDTFLQWMENVHDWVISRQLWWGHQIPAWYNADGDMYVGEEAPEGDGWKQDEDVLDTWFSSALWPFSTMGWPDTDSEDFKRYFPTSTLVTGYDIIFFWVSRMIFQSLEFTGCRPFQNVLIHGLIRDEQGRKMSKSLGNGIDPMDVVDKYGADALRWFLSNGSAPGQDVRFSYEKMDAAWNFINKIWNISRYILMNNEGLSLDQASKNVVLVTNGKAGNVTDRWILHNLNETIAKVTENFDKFEFGVAGHILYNFIWDEFADWYVELTKEVLYSEDEAEKVITRSVLLYTLDKILRLLHPIMPFVTEEIFGQYADGSIVTAAYPTVNPAFENQTAHSGVESLKDLIRAVRNARAEVNVAPSKPITILVKTSDSNLEDFFKANVNYIKRFTNPETLEISSAIATPELAMSAVITGAEIFLPLADLLNVEEELARLNKELAKWQKELDIVAKKLSNDRFVQNAKPEIVQKERDKQIDYQTKYDATVERIKEMEKLIK</sequence>
<keyword id="KW-0030">Aminoacyl-tRNA synthetase</keyword>
<keyword id="KW-0067">ATP-binding</keyword>
<keyword id="KW-0175">Coiled coil</keyword>
<keyword id="KW-0963">Cytoplasm</keyword>
<keyword id="KW-0436">Ligase</keyword>
<keyword id="KW-0547">Nucleotide-binding</keyword>
<keyword id="KW-0648">Protein biosynthesis</keyword>
<keyword id="KW-1185">Reference proteome</keyword>
<dbReference type="EC" id="6.1.1.9" evidence="1"/>
<dbReference type="EMBL" id="AE014133">
    <property type="protein sequence ID" value="AAN59398.1"/>
    <property type="molecule type" value="Genomic_DNA"/>
</dbReference>
<dbReference type="RefSeq" id="NP_722092.1">
    <property type="nucleotide sequence ID" value="NC_004350.2"/>
</dbReference>
<dbReference type="RefSeq" id="WP_002352358.1">
    <property type="nucleotide sequence ID" value="NC_004350.2"/>
</dbReference>
<dbReference type="SMR" id="Q8DSL1"/>
<dbReference type="STRING" id="210007.SMU_1770"/>
<dbReference type="KEGG" id="smu:SMU_1770"/>
<dbReference type="PATRIC" id="fig|210007.7.peg.1580"/>
<dbReference type="eggNOG" id="COG0525">
    <property type="taxonomic scope" value="Bacteria"/>
</dbReference>
<dbReference type="HOGENOM" id="CLU_001493_0_2_9"/>
<dbReference type="OrthoDB" id="9810365at2"/>
<dbReference type="PhylomeDB" id="Q8DSL1"/>
<dbReference type="Proteomes" id="UP000002512">
    <property type="component" value="Chromosome"/>
</dbReference>
<dbReference type="GO" id="GO:0005829">
    <property type="term" value="C:cytosol"/>
    <property type="evidence" value="ECO:0007669"/>
    <property type="project" value="TreeGrafter"/>
</dbReference>
<dbReference type="GO" id="GO:0002161">
    <property type="term" value="F:aminoacyl-tRNA deacylase activity"/>
    <property type="evidence" value="ECO:0007669"/>
    <property type="project" value="InterPro"/>
</dbReference>
<dbReference type="GO" id="GO:0005524">
    <property type="term" value="F:ATP binding"/>
    <property type="evidence" value="ECO:0007669"/>
    <property type="project" value="UniProtKB-UniRule"/>
</dbReference>
<dbReference type="GO" id="GO:0004832">
    <property type="term" value="F:valine-tRNA ligase activity"/>
    <property type="evidence" value="ECO:0007669"/>
    <property type="project" value="UniProtKB-UniRule"/>
</dbReference>
<dbReference type="GO" id="GO:0006438">
    <property type="term" value="P:valyl-tRNA aminoacylation"/>
    <property type="evidence" value="ECO:0007669"/>
    <property type="project" value="UniProtKB-UniRule"/>
</dbReference>
<dbReference type="CDD" id="cd07962">
    <property type="entry name" value="Anticodon_Ia_Val"/>
    <property type="match status" value="1"/>
</dbReference>
<dbReference type="CDD" id="cd00817">
    <property type="entry name" value="ValRS_core"/>
    <property type="match status" value="1"/>
</dbReference>
<dbReference type="FunFam" id="1.10.287.380:FF:000001">
    <property type="entry name" value="Valine--tRNA ligase"/>
    <property type="match status" value="1"/>
</dbReference>
<dbReference type="FunFam" id="1.10.730.10:FF:000014">
    <property type="entry name" value="Valine--tRNA ligase"/>
    <property type="match status" value="1"/>
</dbReference>
<dbReference type="FunFam" id="3.40.50.620:FF:000032">
    <property type="entry name" value="Valine--tRNA ligase"/>
    <property type="match status" value="1"/>
</dbReference>
<dbReference type="FunFam" id="3.40.50.620:FF:000098">
    <property type="entry name" value="Valine--tRNA ligase"/>
    <property type="match status" value="1"/>
</dbReference>
<dbReference type="FunFam" id="3.90.740.10:FF:000005">
    <property type="entry name" value="Valine--tRNA ligase, mitochondrial"/>
    <property type="match status" value="1"/>
</dbReference>
<dbReference type="Gene3D" id="3.40.50.620">
    <property type="entry name" value="HUPs"/>
    <property type="match status" value="2"/>
</dbReference>
<dbReference type="Gene3D" id="1.10.730.10">
    <property type="entry name" value="Isoleucyl-tRNA Synthetase, Domain 1"/>
    <property type="match status" value="1"/>
</dbReference>
<dbReference type="Gene3D" id="1.10.287.380">
    <property type="entry name" value="Valyl-tRNA synthetase, C-terminal domain"/>
    <property type="match status" value="1"/>
</dbReference>
<dbReference type="Gene3D" id="3.90.740.10">
    <property type="entry name" value="Valyl/Leucyl/Isoleucyl-tRNA synthetase, editing domain"/>
    <property type="match status" value="1"/>
</dbReference>
<dbReference type="HAMAP" id="MF_02004">
    <property type="entry name" value="Val_tRNA_synth_type1"/>
    <property type="match status" value="1"/>
</dbReference>
<dbReference type="InterPro" id="IPR001412">
    <property type="entry name" value="aa-tRNA-synth_I_CS"/>
</dbReference>
<dbReference type="InterPro" id="IPR002300">
    <property type="entry name" value="aa-tRNA-synth_Ia"/>
</dbReference>
<dbReference type="InterPro" id="IPR033705">
    <property type="entry name" value="Anticodon_Ia_Val"/>
</dbReference>
<dbReference type="InterPro" id="IPR013155">
    <property type="entry name" value="M/V/L/I-tRNA-synth_anticd-bd"/>
</dbReference>
<dbReference type="InterPro" id="IPR014729">
    <property type="entry name" value="Rossmann-like_a/b/a_fold"/>
</dbReference>
<dbReference type="InterPro" id="IPR010978">
    <property type="entry name" value="tRNA-bd_arm"/>
</dbReference>
<dbReference type="InterPro" id="IPR009080">
    <property type="entry name" value="tRNAsynth_Ia_anticodon-bd"/>
</dbReference>
<dbReference type="InterPro" id="IPR037118">
    <property type="entry name" value="Val-tRNA_synth_C_sf"/>
</dbReference>
<dbReference type="InterPro" id="IPR019499">
    <property type="entry name" value="Val-tRNA_synth_tRNA-bd"/>
</dbReference>
<dbReference type="InterPro" id="IPR009008">
    <property type="entry name" value="Val/Leu/Ile-tRNA-synth_edit"/>
</dbReference>
<dbReference type="InterPro" id="IPR002303">
    <property type="entry name" value="Valyl-tRNA_ligase"/>
</dbReference>
<dbReference type="NCBIfam" id="NF004349">
    <property type="entry name" value="PRK05729.1"/>
    <property type="match status" value="1"/>
</dbReference>
<dbReference type="NCBIfam" id="TIGR00422">
    <property type="entry name" value="valS"/>
    <property type="match status" value="1"/>
</dbReference>
<dbReference type="PANTHER" id="PTHR11946:SF93">
    <property type="entry name" value="VALINE--TRNA LIGASE, CHLOROPLASTIC_MITOCHONDRIAL 2"/>
    <property type="match status" value="1"/>
</dbReference>
<dbReference type="PANTHER" id="PTHR11946">
    <property type="entry name" value="VALYL-TRNA SYNTHETASES"/>
    <property type="match status" value="1"/>
</dbReference>
<dbReference type="Pfam" id="PF08264">
    <property type="entry name" value="Anticodon_1"/>
    <property type="match status" value="1"/>
</dbReference>
<dbReference type="Pfam" id="PF00133">
    <property type="entry name" value="tRNA-synt_1"/>
    <property type="match status" value="2"/>
</dbReference>
<dbReference type="Pfam" id="PF10458">
    <property type="entry name" value="Val_tRNA-synt_C"/>
    <property type="match status" value="1"/>
</dbReference>
<dbReference type="PRINTS" id="PR00986">
    <property type="entry name" value="TRNASYNTHVAL"/>
</dbReference>
<dbReference type="SUPFAM" id="SSF47323">
    <property type="entry name" value="Anticodon-binding domain of a subclass of class I aminoacyl-tRNA synthetases"/>
    <property type="match status" value="1"/>
</dbReference>
<dbReference type="SUPFAM" id="SSF52374">
    <property type="entry name" value="Nucleotidylyl transferase"/>
    <property type="match status" value="1"/>
</dbReference>
<dbReference type="SUPFAM" id="SSF46589">
    <property type="entry name" value="tRNA-binding arm"/>
    <property type="match status" value="1"/>
</dbReference>
<dbReference type="SUPFAM" id="SSF50677">
    <property type="entry name" value="ValRS/IleRS/LeuRS editing domain"/>
    <property type="match status" value="1"/>
</dbReference>
<dbReference type="PROSITE" id="PS00178">
    <property type="entry name" value="AA_TRNA_LIGASE_I"/>
    <property type="match status" value="1"/>
</dbReference>
<proteinExistence type="inferred from homology"/>
<gene>
    <name evidence="1" type="primary">valS</name>
    <name type="ordered locus">SMU_1770</name>
</gene>
<organism>
    <name type="scientific">Streptococcus mutans serotype c (strain ATCC 700610 / UA159)</name>
    <dbReference type="NCBI Taxonomy" id="210007"/>
    <lineage>
        <taxon>Bacteria</taxon>
        <taxon>Bacillati</taxon>
        <taxon>Bacillota</taxon>
        <taxon>Bacilli</taxon>
        <taxon>Lactobacillales</taxon>
        <taxon>Streptococcaceae</taxon>
        <taxon>Streptococcus</taxon>
    </lineage>
</organism>
<evidence type="ECO:0000255" key="1">
    <source>
        <dbReference type="HAMAP-Rule" id="MF_02004"/>
    </source>
</evidence>
<comment type="function">
    <text evidence="1">Catalyzes the attachment of valine to tRNA(Val). As ValRS can inadvertently accommodate and process structurally similar amino acids such as threonine, to avoid such errors, it has a 'posttransfer' editing activity that hydrolyzes mischarged Thr-tRNA(Val) in a tRNA-dependent manner.</text>
</comment>
<comment type="catalytic activity">
    <reaction evidence="1">
        <text>tRNA(Val) + L-valine + ATP = L-valyl-tRNA(Val) + AMP + diphosphate</text>
        <dbReference type="Rhea" id="RHEA:10704"/>
        <dbReference type="Rhea" id="RHEA-COMP:9672"/>
        <dbReference type="Rhea" id="RHEA-COMP:9708"/>
        <dbReference type="ChEBI" id="CHEBI:30616"/>
        <dbReference type="ChEBI" id="CHEBI:33019"/>
        <dbReference type="ChEBI" id="CHEBI:57762"/>
        <dbReference type="ChEBI" id="CHEBI:78442"/>
        <dbReference type="ChEBI" id="CHEBI:78537"/>
        <dbReference type="ChEBI" id="CHEBI:456215"/>
        <dbReference type="EC" id="6.1.1.9"/>
    </reaction>
</comment>
<comment type="subunit">
    <text evidence="1">Monomer.</text>
</comment>
<comment type="subcellular location">
    <subcellularLocation>
        <location evidence="1">Cytoplasm</location>
    </subcellularLocation>
</comment>
<comment type="domain">
    <text evidence="1">ValRS has two distinct active sites: one for aminoacylation and one for editing. The misactivated threonine is translocated from the active site to the editing site.</text>
</comment>
<comment type="domain">
    <text evidence="1">The C-terminal coiled-coil domain is crucial for aminoacylation activity.</text>
</comment>
<comment type="similarity">
    <text evidence="1">Belongs to the class-I aminoacyl-tRNA synthetase family. ValS type 1 subfamily.</text>
</comment>
<protein>
    <recommendedName>
        <fullName evidence="1">Valine--tRNA ligase</fullName>
        <ecNumber evidence="1">6.1.1.9</ecNumber>
    </recommendedName>
    <alternativeName>
        <fullName evidence="1">Valyl-tRNA synthetase</fullName>
        <shortName evidence="1">ValRS</shortName>
    </alternativeName>
</protein>
<reference key="1">
    <citation type="journal article" date="2002" name="Proc. Natl. Acad. Sci. U.S.A.">
        <title>Genome sequence of Streptococcus mutans UA159, a cariogenic dental pathogen.</title>
        <authorList>
            <person name="Ajdic D.J."/>
            <person name="McShan W.M."/>
            <person name="McLaughlin R.E."/>
            <person name="Savic G."/>
            <person name="Chang J."/>
            <person name="Carson M.B."/>
            <person name="Primeaux C."/>
            <person name="Tian R."/>
            <person name="Kenton S."/>
            <person name="Jia H.G."/>
            <person name="Lin S.P."/>
            <person name="Qian Y."/>
            <person name="Li S."/>
            <person name="Zhu H."/>
            <person name="Najar F.Z."/>
            <person name="Lai H."/>
            <person name="White J."/>
            <person name="Roe B.A."/>
            <person name="Ferretti J.J."/>
        </authorList>
    </citation>
    <scope>NUCLEOTIDE SEQUENCE [LARGE SCALE GENOMIC DNA]</scope>
    <source>
        <strain>ATCC 700610 / UA159</strain>
    </source>
</reference>
<name>SYV_STRMU</name>
<feature type="chain" id="PRO_0000224573" description="Valine--tRNA ligase">
    <location>
        <begin position="1"/>
        <end position="883"/>
    </location>
</feature>
<feature type="coiled-coil region" evidence="1">
    <location>
        <begin position="809"/>
        <end position="883"/>
    </location>
</feature>
<feature type="short sequence motif" description="'HIGH' region">
    <location>
        <begin position="46"/>
        <end position="56"/>
    </location>
</feature>
<feature type="short sequence motif" description="'KMSKS' region">
    <location>
        <begin position="520"/>
        <end position="524"/>
    </location>
</feature>
<feature type="binding site" evidence="1">
    <location>
        <position position="523"/>
    </location>
    <ligand>
        <name>ATP</name>
        <dbReference type="ChEBI" id="CHEBI:30616"/>
    </ligand>
</feature>
<accession>Q8DSL1</accession>